<comment type="function">
    <text evidence="1">Transfers electrons from cytochrome c551 to cytochrome oxidase.</text>
</comment>
<comment type="subcellular location">
    <subcellularLocation>
        <location evidence="1">Periplasm</location>
    </subcellularLocation>
</comment>
<keyword id="KW-0002">3D-structure</keyword>
<keyword id="KW-0186">Copper</keyword>
<keyword id="KW-0903">Direct protein sequencing</keyword>
<keyword id="KW-1015">Disulfide bond</keyword>
<keyword id="KW-0249">Electron transport</keyword>
<keyword id="KW-0479">Metal-binding</keyword>
<keyword id="KW-0574">Periplasm</keyword>
<keyword id="KW-0813">Transport</keyword>
<reference evidence="5" key="1">
    <citation type="submission" date="2012-05" db="UniProtKB">
        <title>Unknown Lead induced protein [Pseudomonas aeruginosa DSGPM4].</title>
        <authorList>
            <person name="Diptendu S."/>
            <person name="Goutam P."/>
        </authorList>
    </citation>
    <scope>PROTEIN SEQUENCE</scope>
    <source>
        <strain evidence="4">DSGPM4</strain>
    </source>
</reference>
<sequence length="128" mass="13886">AECSVDIQGNDQMQFNTNAITVDKSCKQFTVNLSHPGNLPKNVMGHNWVLSTAADMQGVVTDGMASGLDKDYLKPDDSRVIAHTKLIGSGEKDSVTFDVSKLKEGEQYMSFCTFPGHSALMKGTLTLK</sequence>
<organism>
    <name type="scientific">Pseudomonas aeruginosa</name>
    <dbReference type="NCBI Taxonomy" id="287"/>
    <lineage>
        <taxon>Bacteria</taxon>
        <taxon>Pseudomonadati</taxon>
        <taxon>Pseudomonadota</taxon>
        <taxon>Gammaproteobacteria</taxon>
        <taxon>Pseudomonadales</taxon>
        <taxon>Pseudomonadaceae</taxon>
        <taxon>Pseudomonas</taxon>
    </lineage>
</organism>
<name>AZUR_PSEAI</name>
<protein>
    <recommendedName>
        <fullName evidence="2">Azurin</fullName>
    </recommendedName>
</protein>
<dbReference type="PDB" id="5SYD">
    <property type="method" value="X-ray"/>
    <property type="resolution" value="2.40 A"/>
    <property type="chains" value="A/B=43-109"/>
</dbReference>
<dbReference type="PDBsum" id="5SYD"/>
<dbReference type="BMRB" id="B3EWN9"/>
<dbReference type="SMR" id="B3EWN9"/>
<dbReference type="eggNOG" id="COG3241">
    <property type="taxonomic scope" value="Bacteria"/>
</dbReference>
<dbReference type="GO" id="GO:0042597">
    <property type="term" value="C:periplasmic space"/>
    <property type="evidence" value="ECO:0007669"/>
    <property type="project" value="UniProtKB-SubCell"/>
</dbReference>
<dbReference type="GO" id="GO:0005507">
    <property type="term" value="F:copper ion binding"/>
    <property type="evidence" value="ECO:0007669"/>
    <property type="project" value="InterPro"/>
</dbReference>
<dbReference type="GO" id="GO:0009055">
    <property type="term" value="F:electron transfer activity"/>
    <property type="evidence" value="ECO:0007669"/>
    <property type="project" value="InterPro"/>
</dbReference>
<dbReference type="CDD" id="cd13843">
    <property type="entry name" value="Azurin_like"/>
    <property type="match status" value="1"/>
</dbReference>
<dbReference type="FunFam" id="2.60.40.420:FF:000040">
    <property type="entry name" value="Azurin"/>
    <property type="match status" value="1"/>
</dbReference>
<dbReference type="Gene3D" id="2.60.40.420">
    <property type="entry name" value="Cupredoxins - blue copper proteins"/>
    <property type="match status" value="1"/>
</dbReference>
<dbReference type="InterPro" id="IPR014068">
    <property type="entry name" value="Azurin"/>
</dbReference>
<dbReference type="InterPro" id="IPR000923">
    <property type="entry name" value="BlueCu_1"/>
</dbReference>
<dbReference type="InterPro" id="IPR050845">
    <property type="entry name" value="Cu-binding_ET"/>
</dbReference>
<dbReference type="InterPro" id="IPR008972">
    <property type="entry name" value="Cupredoxin"/>
</dbReference>
<dbReference type="NCBIfam" id="TIGR02695">
    <property type="entry name" value="azurin"/>
    <property type="match status" value="1"/>
</dbReference>
<dbReference type="PANTHER" id="PTHR38439">
    <property type="entry name" value="AURACYANIN-B"/>
    <property type="match status" value="1"/>
</dbReference>
<dbReference type="PANTHER" id="PTHR38439:SF2">
    <property type="entry name" value="OUTER MEMBRANE PROTEIN H.8"/>
    <property type="match status" value="1"/>
</dbReference>
<dbReference type="Pfam" id="PF00127">
    <property type="entry name" value="Copper-bind"/>
    <property type="match status" value="1"/>
</dbReference>
<dbReference type="SUPFAM" id="SSF49503">
    <property type="entry name" value="Cupredoxins"/>
    <property type="match status" value="1"/>
</dbReference>
<feature type="chain" id="PRO_0000419338" description="Azurin">
    <location>
        <begin position="1"/>
        <end position="128"/>
    </location>
</feature>
<feature type="domain" description="Plastocyanin-like" evidence="3">
    <location>
        <begin position="1"/>
        <end position="128"/>
    </location>
</feature>
<feature type="binding site" evidence="1">
    <location>
        <position position="46"/>
    </location>
    <ligand>
        <name>Cu cation</name>
        <dbReference type="ChEBI" id="CHEBI:23378"/>
    </ligand>
</feature>
<feature type="binding site" evidence="1">
    <location>
        <position position="112"/>
    </location>
    <ligand>
        <name>Cu cation</name>
        <dbReference type="ChEBI" id="CHEBI:23378"/>
    </ligand>
</feature>
<feature type="binding site" evidence="1">
    <location>
        <position position="117"/>
    </location>
    <ligand>
        <name>Cu cation</name>
        <dbReference type="ChEBI" id="CHEBI:23378"/>
    </ligand>
</feature>
<feature type="binding site" evidence="1">
    <location>
        <position position="121"/>
    </location>
    <ligand>
        <name>Cu cation</name>
        <dbReference type="ChEBI" id="CHEBI:23378"/>
    </ligand>
</feature>
<feature type="disulfide bond" evidence="1">
    <location>
        <begin position="3"/>
        <end position="26"/>
    </location>
</feature>
<feature type="strand" evidence="6">
    <location>
        <begin position="49"/>
        <end position="52"/>
    </location>
</feature>
<feature type="turn" evidence="6">
    <location>
        <begin position="53"/>
        <end position="55"/>
    </location>
</feature>
<feature type="helix" evidence="6">
    <location>
        <begin position="56"/>
        <end position="66"/>
    </location>
</feature>
<feature type="helix" evidence="6">
    <location>
        <begin position="68"/>
        <end position="70"/>
    </location>
</feature>
<feature type="strand" evidence="6">
    <location>
        <begin position="81"/>
        <end position="83"/>
    </location>
</feature>
<feature type="strand" evidence="6">
    <location>
        <begin position="92"/>
        <end position="98"/>
    </location>
</feature>
<feature type="helix" evidence="6">
    <location>
        <begin position="99"/>
        <end position="101"/>
    </location>
</feature>
<proteinExistence type="evidence at protein level"/>
<evidence type="ECO:0000250" key="1">
    <source>
        <dbReference type="UniProtKB" id="P00282"/>
    </source>
</evidence>
<evidence type="ECO:0000250" key="2">
    <source>
        <dbReference type="UniProtKB" id="P00286"/>
    </source>
</evidence>
<evidence type="ECO:0000255" key="3"/>
<evidence type="ECO:0000269" key="4">
    <source ref="1"/>
</evidence>
<evidence type="ECO:0000305" key="5"/>
<evidence type="ECO:0007829" key="6">
    <source>
        <dbReference type="PDB" id="5SYD"/>
    </source>
</evidence>
<accession>B3EWN9</accession>